<organism>
    <name type="scientific">Aspergillus fumigatus (strain CBS 144.89 / FGSC A1163 / CEA10)</name>
    <name type="common">Neosartorya fumigata</name>
    <dbReference type="NCBI Taxonomy" id="451804"/>
    <lineage>
        <taxon>Eukaryota</taxon>
        <taxon>Fungi</taxon>
        <taxon>Dikarya</taxon>
        <taxon>Ascomycota</taxon>
        <taxon>Pezizomycotina</taxon>
        <taxon>Eurotiomycetes</taxon>
        <taxon>Eurotiomycetidae</taxon>
        <taxon>Eurotiales</taxon>
        <taxon>Aspergillaceae</taxon>
        <taxon>Aspergillus</taxon>
        <taxon>Aspergillus subgen. Fumigati</taxon>
    </lineage>
</organism>
<sequence length="408" mass="45473">MYHRHSAPPPPGWSGGYPPRQQQWPPPQPYEYPPYPPQGPPPAHTFPPPAHRDYPSPYPTPPPHSPSPYQHPHHGHSQSWSVPAVPPRPPLEAQQFGNGAPSHYRFQYSACTGRRRALLIGINYIGQPNQLRGCINDVTNMSTFLHERYGYRREDMVILTDDQKNPLSIPTKANILRAMQWLVKDAQPNDSLFLHFSGHGGRTPDLDGDEEDGYDDVIYPVDYRVAGHIVDDEMHNIMVRPLRPGVRLTVIFDSCHSGTALDLPYVYSTQGILKEPNLAKEAAQDLFSAISSYGKGDLSGVAMTAIGFLKKAAKGDSARQRTVMTKTSPADVVMFSGSKDTQTSADTFQDGEARGALSWAFIKSLKQWPNQSYLQLLNSIRAQLDGKYTQKPQLSCSHPLDVNLLFVM</sequence>
<gene>
    <name type="primary">casB</name>
    <name type="ORF">AFUB_035090</name>
</gene>
<dbReference type="EC" id="3.4.22.-"/>
<dbReference type="EMBL" id="DS499596">
    <property type="protein sequence ID" value="EDP52345.1"/>
    <property type="status" value="ALT_SEQ"/>
    <property type="molecule type" value="Genomic_DNA"/>
</dbReference>
<dbReference type="SMR" id="B0Y081"/>
<dbReference type="OrthoDB" id="92588at5052"/>
<dbReference type="PhylomeDB" id="B0Y081"/>
<dbReference type="Proteomes" id="UP000001699">
    <property type="component" value="Unassembled WGS sequence"/>
</dbReference>
<dbReference type="GO" id="GO:0005737">
    <property type="term" value="C:cytoplasm"/>
    <property type="evidence" value="ECO:0007669"/>
    <property type="project" value="TreeGrafter"/>
</dbReference>
<dbReference type="GO" id="GO:0004197">
    <property type="term" value="F:cysteine-type endopeptidase activity"/>
    <property type="evidence" value="ECO:0007669"/>
    <property type="project" value="InterPro"/>
</dbReference>
<dbReference type="GO" id="GO:0006915">
    <property type="term" value="P:apoptotic process"/>
    <property type="evidence" value="ECO:0007669"/>
    <property type="project" value="UniProtKB-KW"/>
</dbReference>
<dbReference type="GO" id="GO:0006508">
    <property type="term" value="P:proteolysis"/>
    <property type="evidence" value="ECO:0007669"/>
    <property type="project" value="UniProtKB-KW"/>
</dbReference>
<dbReference type="Gene3D" id="3.40.50.12660">
    <property type="match status" value="1"/>
</dbReference>
<dbReference type="InterPro" id="IPR029030">
    <property type="entry name" value="Caspase-like_dom_sf"/>
</dbReference>
<dbReference type="InterPro" id="IPR050452">
    <property type="entry name" value="Metacaspase"/>
</dbReference>
<dbReference type="InterPro" id="IPR011600">
    <property type="entry name" value="Pept_C14_caspase"/>
</dbReference>
<dbReference type="PANTHER" id="PTHR48104:SF23">
    <property type="entry name" value="METACASPASE (EUROFUNG)"/>
    <property type="match status" value="1"/>
</dbReference>
<dbReference type="PANTHER" id="PTHR48104">
    <property type="entry name" value="METACASPASE-4"/>
    <property type="match status" value="1"/>
</dbReference>
<dbReference type="Pfam" id="PF00656">
    <property type="entry name" value="Peptidase_C14"/>
    <property type="match status" value="1"/>
</dbReference>
<dbReference type="SUPFAM" id="SSF52129">
    <property type="entry name" value="Caspase-like"/>
    <property type="match status" value="1"/>
</dbReference>
<accession>B0Y081</accession>
<evidence type="ECO:0000250" key="1"/>
<evidence type="ECO:0000255" key="2"/>
<evidence type="ECO:0000256" key="3">
    <source>
        <dbReference type="SAM" id="MobiDB-lite"/>
    </source>
</evidence>
<evidence type="ECO:0000305" key="4"/>
<feature type="propeptide" id="PRO_0000333618" evidence="2">
    <location>
        <begin position="1"/>
        <end status="unknown"/>
    </location>
</feature>
<feature type="chain" id="PRO_0000333619" description="Metacaspase-1B">
    <location>
        <begin status="unknown"/>
        <end position="408"/>
    </location>
</feature>
<feature type="region of interest" description="Disordered" evidence="3">
    <location>
        <begin position="1"/>
        <end position="98"/>
    </location>
</feature>
<feature type="compositionally biased region" description="Pro residues" evidence="3">
    <location>
        <begin position="24"/>
        <end position="49"/>
    </location>
</feature>
<feature type="compositionally biased region" description="Pro residues" evidence="3">
    <location>
        <begin position="56"/>
        <end position="66"/>
    </location>
</feature>
<feature type="active site" evidence="1">
    <location>
        <position position="199"/>
    </location>
</feature>
<feature type="active site" evidence="1">
    <location>
        <position position="255"/>
    </location>
</feature>
<protein>
    <recommendedName>
        <fullName>Metacaspase-1B</fullName>
        <ecNumber>3.4.22.-</ecNumber>
    </recommendedName>
</protein>
<proteinExistence type="inferred from homology"/>
<keyword id="KW-0053">Apoptosis</keyword>
<keyword id="KW-0378">Hydrolase</keyword>
<keyword id="KW-0645">Protease</keyword>
<keyword id="KW-0788">Thiol protease</keyword>
<keyword id="KW-0865">Zymogen</keyword>
<comment type="function">
    <text evidence="1">Involved in cell death (apoptosis) (By similarity). Required for the apoptotic-like loss of membrane phospholipid asymmetry at stationary phase and facilitates growth under conditions of endoplasmic reticulum stress.</text>
</comment>
<comment type="similarity">
    <text evidence="4">Belongs to the peptidase C14B family.</text>
</comment>
<comment type="sequence caution" evidence="4">
    <conflict type="erroneous gene model prediction">
        <sequence resource="EMBL-CDS" id="EDP52345"/>
    </conflict>
</comment>
<reference key="1">
    <citation type="journal article" date="2008" name="PLoS Genet.">
        <title>Genomic islands in the pathogenic filamentous fungus Aspergillus fumigatus.</title>
        <authorList>
            <person name="Fedorova N.D."/>
            <person name="Khaldi N."/>
            <person name="Joardar V.S."/>
            <person name="Maiti R."/>
            <person name="Amedeo P."/>
            <person name="Anderson M.J."/>
            <person name="Crabtree J."/>
            <person name="Silva J.C."/>
            <person name="Badger J.H."/>
            <person name="Albarraq A."/>
            <person name="Angiuoli S."/>
            <person name="Bussey H."/>
            <person name="Bowyer P."/>
            <person name="Cotty P.J."/>
            <person name="Dyer P.S."/>
            <person name="Egan A."/>
            <person name="Galens K."/>
            <person name="Fraser-Liggett C.M."/>
            <person name="Haas B.J."/>
            <person name="Inman J.M."/>
            <person name="Kent R."/>
            <person name="Lemieux S."/>
            <person name="Malavazi I."/>
            <person name="Orvis J."/>
            <person name="Roemer T."/>
            <person name="Ronning C.M."/>
            <person name="Sundaram J.P."/>
            <person name="Sutton G."/>
            <person name="Turner G."/>
            <person name="Venter J.C."/>
            <person name="White O.R."/>
            <person name="Whitty B.R."/>
            <person name="Youngman P."/>
            <person name="Wolfe K.H."/>
            <person name="Goldman G.H."/>
            <person name="Wortman J.R."/>
            <person name="Jiang B."/>
            <person name="Denning D.W."/>
            <person name="Nierman W.C."/>
        </authorList>
    </citation>
    <scope>NUCLEOTIDE SEQUENCE [LARGE SCALE GENOMIC DNA]</scope>
    <source>
        <strain>CBS 144.89 / FGSC A1163 / CEA10</strain>
    </source>
</reference>
<name>MCA1B_ASPFC</name>